<sequence>MLNLGRARTGRQNRSMSFEGLDFADPKKNNNYMGKIVLVMTLTAMCILLLNQSPTFNTPSVFSRSEPGVTHVLVTGGAGYIGSHAALRLLKDSYRVTIVDNLSRGNLGAVKILQQLFPEPGKLQFIYADLGDANAVNKIFSENAFDAVMHFAAVAYVGESTQFPLKYYHNITSNTLVVLETMAAHGVKTLIYSSTCATYGEPEKMPITEETPQVPINPYGKAKKMAEDIILDFSKNSIMAVMILRYFNVIGSDPEGRLGEAPRPELSEHGRISGACFDAARGIIPGLQIKGTDYKTVDGTCVRDYIDVTDLVDAHVKALEKAKPRKVGIFNVGTGKGSSVKEFVEACKKATGVDIKVDYLERRAGDYAEVYSDPRKIKEELNWTAKHTNLQESLKMAWRWQKLHRSGYGSSSLVSAY</sequence>
<dbReference type="EC" id="5.1.3.5"/>
<dbReference type="EMBL" id="AC004238">
    <property type="protein sequence ID" value="AAC12825.1"/>
    <property type="status" value="ALT_SEQ"/>
    <property type="molecule type" value="Genomic_DNA"/>
</dbReference>
<dbReference type="EMBL" id="CP002685">
    <property type="protein sequence ID" value="AEC09030.1"/>
    <property type="molecule type" value="Genomic_DNA"/>
</dbReference>
<dbReference type="EMBL" id="CP002685">
    <property type="protein sequence ID" value="ANM62283.1"/>
    <property type="molecule type" value="Genomic_DNA"/>
</dbReference>
<dbReference type="EMBL" id="CP002685">
    <property type="protein sequence ID" value="ANM62284.1"/>
    <property type="molecule type" value="Genomic_DNA"/>
</dbReference>
<dbReference type="EMBL" id="CP002685">
    <property type="protein sequence ID" value="ANM62285.1"/>
    <property type="molecule type" value="Genomic_DNA"/>
</dbReference>
<dbReference type="EMBL" id="AY070487">
    <property type="protein sequence ID" value="AAL49952.1"/>
    <property type="molecule type" value="mRNA"/>
</dbReference>
<dbReference type="EMBL" id="AY091699">
    <property type="protein sequence ID" value="AAM10298.1"/>
    <property type="molecule type" value="mRNA"/>
</dbReference>
<dbReference type="PIR" id="T00467">
    <property type="entry name" value="T00467"/>
</dbReference>
<dbReference type="RefSeq" id="NP_001324451.1">
    <molecule id="O64749-2"/>
    <property type="nucleotide sequence ID" value="NM_001336532.1"/>
</dbReference>
<dbReference type="RefSeq" id="NP_001324452.1">
    <molecule id="O64749-2"/>
    <property type="nucleotide sequence ID" value="NM_001336531.1"/>
</dbReference>
<dbReference type="RefSeq" id="NP_001324453.1">
    <molecule id="O64749-2"/>
    <property type="nucleotide sequence ID" value="NM_001336533.1"/>
</dbReference>
<dbReference type="RefSeq" id="NP_850238.1">
    <molecule id="O64749-2"/>
    <property type="nucleotide sequence ID" value="NM_179907.5"/>
</dbReference>
<dbReference type="SMR" id="O64749"/>
<dbReference type="FunCoup" id="O64749">
    <property type="interactions" value="140"/>
</dbReference>
<dbReference type="STRING" id="3702.O64749"/>
<dbReference type="iPTMnet" id="O64749"/>
<dbReference type="PaxDb" id="3702-AT2G34850.1"/>
<dbReference type="PeptideAtlas" id="O64749"/>
<dbReference type="ProteomicsDB" id="240606">
    <molecule id="O64749-1"/>
</dbReference>
<dbReference type="EnsemblPlants" id="AT2G34850.1">
    <molecule id="O64749-2"/>
    <property type="protein sequence ID" value="AT2G34850.1"/>
    <property type="gene ID" value="AT2G34850"/>
</dbReference>
<dbReference type="EnsemblPlants" id="AT2G34850.2">
    <molecule id="O64749-2"/>
    <property type="protein sequence ID" value="AT2G34850.2"/>
    <property type="gene ID" value="AT2G34850"/>
</dbReference>
<dbReference type="EnsemblPlants" id="AT2G34850.3">
    <molecule id="O64749-2"/>
    <property type="protein sequence ID" value="AT2G34850.3"/>
    <property type="gene ID" value="AT2G34850"/>
</dbReference>
<dbReference type="EnsemblPlants" id="AT2G34850.4">
    <molecule id="O64749-2"/>
    <property type="protein sequence ID" value="AT2G34850.4"/>
    <property type="gene ID" value="AT2G34850"/>
</dbReference>
<dbReference type="GeneID" id="818050"/>
<dbReference type="Gramene" id="AT2G34850.1">
    <molecule id="O64749-2"/>
    <property type="protein sequence ID" value="AT2G34850.1"/>
    <property type="gene ID" value="AT2G34850"/>
</dbReference>
<dbReference type="Gramene" id="AT2G34850.2">
    <molecule id="O64749-2"/>
    <property type="protein sequence ID" value="AT2G34850.2"/>
    <property type="gene ID" value="AT2G34850"/>
</dbReference>
<dbReference type="Gramene" id="AT2G34850.3">
    <molecule id="O64749-2"/>
    <property type="protein sequence ID" value="AT2G34850.3"/>
    <property type="gene ID" value="AT2G34850"/>
</dbReference>
<dbReference type="Gramene" id="AT2G34850.4">
    <molecule id="O64749-2"/>
    <property type="protein sequence ID" value="AT2G34850.4"/>
    <property type="gene ID" value="AT2G34850"/>
</dbReference>
<dbReference type="KEGG" id="ath:AT2G34850"/>
<dbReference type="Araport" id="AT2G34850"/>
<dbReference type="TAIR" id="AT2G34850">
    <property type="gene designation" value="MEE25"/>
</dbReference>
<dbReference type="eggNOG" id="KOG1371">
    <property type="taxonomic scope" value="Eukaryota"/>
</dbReference>
<dbReference type="InParanoid" id="O64749"/>
<dbReference type="OMA" id="MGAHENG"/>
<dbReference type="PhylomeDB" id="O64749"/>
<dbReference type="BioCyc" id="ARA:AT2G34850-MONOMER"/>
<dbReference type="BRENDA" id="5.1.3.5">
    <property type="organism ID" value="399"/>
</dbReference>
<dbReference type="UniPathway" id="UPA00797">
    <property type="reaction ID" value="UER00772"/>
</dbReference>
<dbReference type="UniPathway" id="UPA00963"/>
<dbReference type="PRO" id="PR:O64749"/>
<dbReference type="Proteomes" id="UP000006548">
    <property type="component" value="Chromosome 2"/>
</dbReference>
<dbReference type="ExpressionAtlas" id="O64749">
    <property type="expression patterns" value="baseline and differential"/>
</dbReference>
<dbReference type="GO" id="GO:0032580">
    <property type="term" value="C:Golgi cisterna membrane"/>
    <property type="evidence" value="ECO:0007669"/>
    <property type="project" value="UniProtKB-SubCell"/>
</dbReference>
<dbReference type="GO" id="GO:0050373">
    <property type="term" value="F:UDP-arabinose 4-epimerase activity"/>
    <property type="evidence" value="ECO:0007669"/>
    <property type="project" value="UniProtKB-EC"/>
</dbReference>
<dbReference type="GO" id="GO:0003978">
    <property type="term" value="F:UDP-glucose 4-epimerase activity"/>
    <property type="evidence" value="ECO:0007669"/>
    <property type="project" value="InterPro"/>
</dbReference>
<dbReference type="GO" id="GO:0045227">
    <property type="term" value="P:capsule polysaccharide biosynthetic process"/>
    <property type="evidence" value="ECO:0007669"/>
    <property type="project" value="UniProtKB-UniPathway"/>
</dbReference>
<dbReference type="GO" id="GO:0009793">
    <property type="term" value="P:embryo development ending in seed dormancy"/>
    <property type="evidence" value="ECO:0000315"/>
    <property type="project" value="TAIR"/>
</dbReference>
<dbReference type="GO" id="GO:0006012">
    <property type="term" value="P:galactose metabolic process"/>
    <property type="evidence" value="ECO:0007669"/>
    <property type="project" value="InterPro"/>
</dbReference>
<dbReference type="GO" id="GO:0048868">
    <property type="term" value="P:pollen tube development"/>
    <property type="evidence" value="ECO:0000315"/>
    <property type="project" value="TAIR"/>
</dbReference>
<dbReference type="GO" id="GO:0033358">
    <property type="term" value="P:UDP-L-arabinose biosynthetic process"/>
    <property type="evidence" value="ECO:0007669"/>
    <property type="project" value="UniProtKB-UniPathway"/>
</dbReference>
<dbReference type="CDD" id="cd05247">
    <property type="entry name" value="UDP_G4E_1_SDR_e"/>
    <property type="match status" value="1"/>
</dbReference>
<dbReference type="Gene3D" id="3.40.50.720">
    <property type="entry name" value="NAD(P)-binding Rossmann-like Domain"/>
    <property type="match status" value="1"/>
</dbReference>
<dbReference type="Gene3D" id="3.90.25.10">
    <property type="entry name" value="UDP-galactose 4-epimerase, domain 1"/>
    <property type="match status" value="1"/>
</dbReference>
<dbReference type="InterPro" id="IPR016040">
    <property type="entry name" value="NAD(P)-bd_dom"/>
</dbReference>
<dbReference type="InterPro" id="IPR036291">
    <property type="entry name" value="NAD(P)-bd_dom_sf"/>
</dbReference>
<dbReference type="InterPro" id="IPR005886">
    <property type="entry name" value="UDP_G4E"/>
</dbReference>
<dbReference type="NCBIfam" id="TIGR01179">
    <property type="entry name" value="galE"/>
    <property type="match status" value="1"/>
</dbReference>
<dbReference type="PANTHER" id="PTHR43725:SF33">
    <property type="entry name" value="UDP-ARABINOSE 4-EPIMERASE 2-RELATED"/>
    <property type="match status" value="1"/>
</dbReference>
<dbReference type="PANTHER" id="PTHR43725">
    <property type="entry name" value="UDP-GLUCOSE 4-EPIMERASE"/>
    <property type="match status" value="1"/>
</dbReference>
<dbReference type="Pfam" id="PF16363">
    <property type="entry name" value="GDP_Man_Dehyd"/>
    <property type="match status" value="1"/>
</dbReference>
<dbReference type="SUPFAM" id="SSF51735">
    <property type="entry name" value="NAD(P)-binding Rossmann-fold domains"/>
    <property type="match status" value="1"/>
</dbReference>
<gene>
    <name type="ordered locus">At2g34850</name>
    <name type="ORF">F19I3.8</name>
</gene>
<feature type="chain" id="PRO_0000183230" description="Putative UDP-arabinose 4-epimerase 2">
    <location>
        <begin position="1"/>
        <end position="417"/>
    </location>
</feature>
<feature type="topological domain" description="Cytoplasmic" evidence="2">
    <location>
        <begin position="1"/>
        <end position="31"/>
    </location>
</feature>
<feature type="transmembrane region" description="Helical; Signal-anchor for type II membrane protein" evidence="2">
    <location>
        <begin position="32"/>
        <end position="54"/>
    </location>
</feature>
<feature type="topological domain" description="Lumenal" evidence="2">
    <location>
        <begin position="55"/>
        <end position="417"/>
    </location>
</feature>
<feature type="active site" description="Proton acceptor" evidence="1">
    <location>
        <position position="219"/>
    </location>
</feature>
<feature type="binding site" evidence="1">
    <location>
        <begin position="71"/>
        <end position="102"/>
    </location>
    <ligand>
        <name>NAD(+)</name>
        <dbReference type="ChEBI" id="CHEBI:57540"/>
    </ligand>
</feature>
<feature type="splice variant" id="VSP_017346" description="In isoform 2." evidence="3">
    <location>
        <begin position="1"/>
        <end position="181"/>
    </location>
</feature>
<accession>O64749</accession>
<accession>Q8VYK0</accession>
<keyword id="KW-0025">Alternative splicing</keyword>
<keyword id="KW-0119">Carbohydrate metabolism</keyword>
<keyword id="KW-0333">Golgi apparatus</keyword>
<keyword id="KW-0413">Isomerase</keyword>
<keyword id="KW-0472">Membrane</keyword>
<keyword id="KW-0520">NAD</keyword>
<keyword id="KW-1185">Reference proteome</keyword>
<keyword id="KW-0735">Signal-anchor</keyword>
<keyword id="KW-0812">Transmembrane</keyword>
<keyword id="KW-1133">Transmembrane helix</keyword>
<comment type="catalytic activity">
    <reaction>
        <text>UDP-beta-L-arabinopyranose = UDP-alpha-D-xylose</text>
        <dbReference type="Rhea" id="RHEA:11320"/>
        <dbReference type="ChEBI" id="CHEBI:57632"/>
        <dbReference type="ChEBI" id="CHEBI:61457"/>
        <dbReference type="EC" id="5.1.3.5"/>
    </reaction>
</comment>
<comment type="cofactor">
    <cofactor evidence="1">
        <name>NAD(+)</name>
        <dbReference type="ChEBI" id="CHEBI:57540"/>
    </cofactor>
</comment>
<comment type="pathway">
    <text>Nucleotide-sugar biosynthesis; UDP-L-arabinose biosynthesis; UDP-L-arabinose from UDP-alpha-D-xylose: step 1/1.</text>
</comment>
<comment type="pathway">
    <text>Cell wall biogenesis; cell wall polysaccharide biosynthesis.</text>
</comment>
<comment type="subcellular location">
    <subcellularLocation>
        <location evidence="4">Golgi apparatus</location>
        <location evidence="4">Golgi stack membrane</location>
        <topology evidence="4">Single-pass type II membrane protein</topology>
    </subcellularLocation>
</comment>
<comment type="alternative products">
    <event type="alternative splicing"/>
    <isoform>
        <id>O64749-1</id>
        <name>1</name>
        <sequence type="displayed"/>
    </isoform>
    <isoform>
        <id>O64749-2</id>
        <name>2</name>
        <sequence type="described" ref="VSP_017346"/>
    </isoform>
</comment>
<comment type="miscellaneous">
    <molecule>Isoform 2</molecule>
    <text evidence="4">May be due to a competing donor splice site.</text>
</comment>
<comment type="similarity">
    <text evidence="4">Belongs to the NAD(P)-dependent epimerase/dehydratase family.</text>
</comment>
<comment type="sequence caution" evidence="4">
    <conflict type="erroneous gene model prediction">
        <sequence resource="EMBL-CDS" id="AAC12825"/>
    </conflict>
</comment>
<evidence type="ECO:0000250" key="1"/>
<evidence type="ECO:0000255" key="2"/>
<evidence type="ECO:0000303" key="3">
    <source>
    </source>
</evidence>
<evidence type="ECO:0000305" key="4"/>
<protein>
    <recommendedName>
        <fullName>Putative UDP-arabinose 4-epimerase 2</fullName>
        <ecNumber>5.1.3.5</ecNumber>
    </recommendedName>
    <alternativeName>
        <fullName>UDP-D-xylose 4-epimerase 2</fullName>
    </alternativeName>
</protein>
<organism>
    <name type="scientific">Arabidopsis thaliana</name>
    <name type="common">Mouse-ear cress</name>
    <dbReference type="NCBI Taxonomy" id="3702"/>
    <lineage>
        <taxon>Eukaryota</taxon>
        <taxon>Viridiplantae</taxon>
        <taxon>Streptophyta</taxon>
        <taxon>Embryophyta</taxon>
        <taxon>Tracheophyta</taxon>
        <taxon>Spermatophyta</taxon>
        <taxon>Magnoliopsida</taxon>
        <taxon>eudicotyledons</taxon>
        <taxon>Gunneridae</taxon>
        <taxon>Pentapetalae</taxon>
        <taxon>rosids</taxon>
        <taxon>malvids</taxon>
        <taxon>Brassicales</taxon>
        <taxon>Brassicaceae</taxon>
        <taxon>Camelineae</taxon>
        <taxon>Arabidopsis</taxon>
    </lineage>
</organism>
<reference key="1">
    <citation type="journal article" date="1999" name="Nature">
        <title>Sequence and analysis of chromosome 2 of the plant Arabidopsis thaliana.</title>
        <authorList>
            <person name="Lin X."/>
            <person name="Kaul S."/>
            <person name="Rounsley S.D."/>
            <person name="Shea T.P."/>
            <person name="Benito M.-I."/>
            <person name="Town C.D."/>
            <person name="Fujii C.Y."/>
            <person name="Mason T.M."/>
            <person name="Bowman C.L."/>
            <person name="Barnstead M.E."/>
            <person name="Feldblyum T.V."/>
            <person name="Buell C.R."/>
            <person name="Ketchum K.A."/>
            <person name="Lee J.J."/>
            <person name="Ronning C.M."/>
            <person name="Koo H.L."/>
            <person name="Moffat K.S."/>
            <person name="Cronin L.A."/>
            <person name="Shen M."/>
            <person name="Pai G."/>
            <person name="Van Aken S."/>
            <person name="Umayam L."/>
            <person name="Tallon L.J."/>
            <person name="Gill J.E."/>
            <person name="Adams M.D."/>
            <person name="Carrera A.J."/>
            <person name="Creasy T.H."/>
            <person name="Goodman H.M."/>
            <person name="Somerville C.R."/>
            <person name="Copenhaver G.P."/>
            <person name="Preuss D."/>
            <person name="Nierman W.C."/>
            <person name="White O."/>
            <person name="Eisen J.A."/>
            <person name="Salzberg S.L."/>
            <person name="Fraser C.M."/>
            <person name="Venter J.C."/>
        </authorList>
    </citation>
    <scope>NUCLEOTIDE SEQUENCE [LARGE SCALE GENOMIC DNA]</scope>
    <source>
        <strain>cv. Columbia</strain>
    </source>
</reference>
<reference key="2">
    <citation type="journal article" date="2017" name="Plant J.">
        <title>Araport11: a complete reannotation of the Arabidopsis thaliana reference genome.</title>
        <authorList>
            <person name="Cheng C.Y."/>
            <person name="Krishnakumar V."/>
            <person name="Chan A.P."/>
            <person name="Thibaud-Nissen F."/>
            <person name="Schobel S."/>
            <person name="Town C.D."/>
        </authorList>
    </citation>
    <scope>GENOME REANNOTATION</scope>
    <source>
        <strain>cv. Columbia</strain>
    </source>
</reference>
<reference key="3">
    <citation type="journal article" date="2003" name="Science">
        <title>Empirical analysis of transcriptional activity in the Arabidopsis genome.</title>
        <authorList>
            <person name="Yamada K."/>
            <person name="Lim J."/>
            <person name="Dale J.M."/>
            <person name="Chen H."/>
            <person name="Shinn P."/>
            <person name="Palm C.J."/>
            <person name="Southwick A.M."/>
            <person name="Wu H.C."/>
            <person name="Kim C.J."/>
            <person name="Nguyen M."/>
            <person name="Pham P.K."/>
            <person name="Cheuk R.F."/>
            <person name="Karlin-Newmann G."/>
            <person name="Liu S.X."/>
            <person name="Lam B."/>
            <person name="Sakano H."/>
            <person name="Wu T."/>
            <person name="Yu G."/>
            <person name="Miranda M."/>
            <person name="Quach H.L."/>
            <person name="Tripp M."/>
            <person name="Chang C.H."/>
            <person name="Lee J.M."/>
            <person name="Toriumi M.J."/>
            <person name="Chan M.M."/>
            <person name="Tang C.C."/>
            <person name="Onodera C.S."/>
            <person name="Deng J.M."/>
            <person name="Akiyama K."/>
            <person name="Ansari Y."/>
            <person name="Arakawa T."/>
            <person name="Banh J."/>
            <person name="Banno F."/>
            <person name="Bowser L."/>
            <person name="Brooks S.Y."/>
            <person name="Carninci P."/>
            <person name="Chao Q."/>
            <person name="Choy N."/>
            <person name="Enju A."/>
            <person name="Goldsmith A.D."/>
            <person name="Gurjal M."/>
            <person name="Hansen N.F."/>
            <person name="Hayashizaki Y."/>
            <person name="Johnson-Hopson C."/>
            <person name="Hsuan V.W."/>
            <person name="Iida K."/>
            <person name="Karnes M."/>
            <person name="Khan S."/>
            <person name="Koesema E."/>
            <person name="Ishida J."/>
            <person name="Jiang P.X."/>
            <person name="Jones T."/>
            <person name="Kawai J."/>
            <person name="Kamiya A."/>
            <person name="Meyers C."/>
            <person name="Nakajima M."/>
            <person name="Narusaka M."/>
            <person name="Seki M."/>
            <person name="Sakurai T."/>
            <person name="Satou M."/>
            <person name="Tamse R."/>
            <person name="Vaysberg M."/>
            <person name="Wallender E.K."/>
            <person name="Wong C."/>
            <person name="Yamamura Y."/>
            <person name="Yuan S."/>
            <person name="Shinozaki K."/>
            <person name="Davis R.W."/>
            <person name="Theologis A."/>
            <person name="Ecker J.R."/>
        </authorList>
    </citation>
    <scope>NUCLEOTIDE SEQUENCE [LARGE SCALE MRNA] (ISOFORM 2)</scope>
    <source>
        <strain>cv. Columbia</strain>
    </source>
</reference>
<proteinExistence type="evidence at transcript level"/>
<name>ARAE2_ARATH</name>